<comment type="function">
    <text evidence="1">Catalyzes the attachment of tryptophan to tRNA(Trp).</text>
</comment>
<comment type="catalytic activity">
    <reaction evidence="1">
        <text>tRNA(Trp) + L-tryptophan + ATP = L-tryptophyl-tRNA(Trp) + AMP + diphosphate + H(+)</text>
        <dbReference type="Rhea" id="RHEA:24080"/>
        <dbReference type="Rhea" id="RHEA-COMP:9671"/>
        <dbReference type="Rhea" id="RHEA-COMP:9705"/>
        <dbReference type="ChEBI" id="CHEBI:15378"/>
        <dbReference type="ChEBI" id="CHEBI:30616"/>
        <dbReference type="ChEBI" id="CHEBI:33019"/>
        <dbReference type="ChEBI" id="CHEBI:57912"/>
        <dbReference type="ChEBI" id="CHEBI:78442"/>
        <dbReference type="ChEBI" id="CHEBI:78535"/>
        <dbReference type="ChEBI" id="CHEBI:456215"/>
        <dbReference type="EC" id="6.1.1.2"/>
    </reaction>
</comment>
<comment type="subunit">
    <text evidence="1">Homodimer.</text>
</comment>
<comment type="subcellular location">
    <subcellularLocation>
        <location evidence="1">Cytoplasm</location>
    </subcellularLocation>
</comment>
<comment type="similarity">
    <text evidence="1">Belongs to the class-I aminoacyl-tRNA synthetase family.</text>
</comment>
<keyword id="KW-0030">Aminoacyl-tRNA synthetase</keyword>
<keyword id="KW-0067">ATP-binding</keyword>
<keyword id="KW-0963">Cytoplasm</keyword>
<keyword id="KW-0436">Ligase</keyword>
<keyword id="KW-0547">Nucleotide-binding</keyword>
<keyword id="KW-0648">Protein biosynthesis</keyword>
<keyword id="KW-1185">Reference proteome</keyword>
<proteinExistence type="inferred from homology"/>
<sequence length="336" mass="36272">MSTPTGSRRIFSGVQPTSDSLHLGNALGAVAQWVGLQDDHDAFFCVVDLHAITIPQDPEALRRRTLITAAQYLALGIDPGRATIFVQSQVPAHTQLAWVLGCFTGFGQASRMTQFKDKSARQGSEATTVGLFTYPVLQAADVLAYDTELVPVGEDQRQHLELARDVAQRFNSRFPGTLVVPDVLIPKMTAKIYDLQDPTSKMSKSAGTDAGLINLLDDPALSAKKIRSAVTDSERDIRYDPDVKPGVSNLLNIQSAVTGTDIDVLVDGYAGHGYGDLKKDTAEAVVEFVNPIQARVDELTADPAELEAVLAAGAQRAHDVASKTVQRVYDRLGFLL</sequence>
<name>SYW_MYCTO</name>
<dbReference type="EC" id="6.1.1.2" evidence="1"/>
<dbReference type="EMBL" id="AE000516">
    <property type="protein sequence ID" value="AAK47784.1"/>
    <property type="molecule type" value="Genomic_DNA"/>
</dbReference>
<dbReference type="PIR" id="G70845">
    <property type="entry name" value="G70845"/>
</dbReference>
<dbReference type="RefSeq" id="WP_003417440.1">
    <property type="nucleotide sequence ID" value="NZ_KK341227.1"/>
</dbReference>
<dbReference type="SMR" id="P9WFT2"/>
<dbReference type="KEGG" id="mtc:MT3440"/>
<dbReference type="PATRIC" id="fig|83331.31.peg.3700"/>
<dbReference type="HOGENOM" id="CLU_029244_1_1_11"/>
<dbReference type="Proteomes" id="UP000001020">
    <property type="component" value="Chromosome"/>
</dbReference>
<dbReference type="GO" id="GO:0005829">
    <property type="term" value="C:cytosol"/>
    <property type="evidence" value="ECO:0007669"/>
    <property type="project" value="TreeGrafter"/>
</dbReference>
<dbReference type="GO" id="GO:0005524">
    <property type="term" value="F:ATP binding"/>
    <property type="evidence" value="ECO:0007669"/>
    <property type="project" value="UniProtKB-UniRule"/>
</dbReference>
<dbReference type="GO" id="GO:0004830">
    <property type="term" value="F:tryptophan-tRNA ligase activity"/>
    <property type="evidence" value="ECO:0007669"/>
    <property type="project" value="UniProtKB-UniRule"/>
</dbReference>
<dbReference type="GO" id="GO:0006436">
    <property type="term" value="P:tryptophanyl-tRNA aminoacylation"/>
    <property type="evidence" value="ECO:0007669"/>
    <property type="project" value="UniProtKB-UniRule"/>
</dbReference>
<dbReference type="CDD" id="cd00806">
    <property type="entry name" value="TrpRS_core"/>
    <property type="match status" value="1"/>
</dbReference>
<dbReference type="FunFam" id="1.10.240.10:FF:000002">
    <property type="entry name" value="Tryptophan--tRNA ligase"/>
    <property type="match status" value="1"/>
</dbReference>
<dbReference type="Gene3D" id="3.40.50.620">
    <property type="entry name" value="HUPs"/>
    <property type="match status" value="1"/>
</dbReference>
<dbReference type="Gene3D" id="1.10.240.10">
    <property type="entry name" value="Tyrosyl-Transfer RNA Synthetase"/>
    <property type="match status" value="1"/>
</dbReference>
<dbReference type="HAMAP" id="MF_00140_B">
    <property type="entry name" value="Trp_tRNA_synth_B"/>
    <property type="match status" value="1"/>
</dbReference>
<dbReference type="InterPro" id="IPR001412">
    <property type="entry name" value="aa-tRNA-synth_I_CS"/>
</dbReference>
<dbReference type="InterPro" id="IPR002305">
    <property type="entry name" value="aa-tRNA-synth_Ic"/>
</dbReference>
<dbReference type="InterPro" id="IPR014729">
    <property type="entry name" value="Rossmann-like_a/b/a_fold"/>
</dbReference>
<dbReference type="InterPro" id="IPR002306">
    <property type="entry name" value="Trp-tRNA-ligase"/>
</dbReference>
<dbReference type="InterPro" id="IPR024109">
    <property type="entry name" value="Trp-tRNA-ligase_bac-type"/>
</dbReference>
<dbReference type="InterPro" id="IPR050203">
    <property type="entry name" value="Trp-tRNA_synthetase"/>
</dbReference>
<dbReference type="NCBIfam" id="TIGR00233">
    <property type="entry name" value="trpS"/>
    <property type="match status" value="1"/>
</dbReference>
<dbReference type="PANTHER" id="PTHR43766">
    <property type="entry name" value="TRYPTOPHAN--TRNA LIGASE, MITOCHONDRIAL"/>
    <property type="match status" value="1"/>
</dbReference>
<dbReference type="PANTHER" id="PTHR43766:SF1">
    <property type="entry name" value="TRYPTOPHAN--TRNA LIGASE, MITOCHONDRIAL"/>
    <property type="match status" value="1"/>
</dbReference>
<dbReference type="Pfam" id="PF00579">
    <property type="entry name" value="tRNA-synt_1b"/>
    <property type="match status" value="1"/>
</dbReference>
<dbReference type="PRINTS" id="PR01039">
    <property type="entry name" value="TRNASYNTHTRP"/>
</dbReference>
<dbReference type="SUPFAM" id="SSF52374">
    <property type="entry name" value="Nucleotidylyl transferase"/>
    <property type="match status" value="1"/>
</dbReference>
<dbReference type="PROSITE" id="PS00178">
    <property type="entry name" value="AA_TRNA_LIGASE_I"/>
    <property type="match status" value="1"/>
</dbReference>
<protein>
    <recommendedName>
        <fullName evidence="1">Tryptophan--tRNA ligase</fullName>
        <ecNumber evidence="1">6.1.1.2</ecNumber>
    </recommendedName>
    <alternativeName>
        <fullName evidence="1">Tryptophanyl-tRNA synthetase</fullName>
        <shortName evidence="1">TrpRS</shortName>
    </alternativeName>
</protein>
<feature type="chain" id="PRO_0000428482" description="Tryptophan--tRNA ligase">
    <location>
        <begin position="1"/>
        <end position="336"/>
    </location>
</feature>
<feature type="short sequence motif" description="'HIGH' region" evidence="1">
    <location>
        <begin position="16"/>
        <end position="25"/>
    </location>
</feature>
<feature type="short sequence motif" description="'KMSKS' region" evidence="1">
    <location>
        <begin position="201"/>
        <end position="205"/>
    </location>
</feature>
<feature type="binding site" evidence="1">
    <location>
        <begin position="15"/>
        <end position="17"/>
    </location>
    <ligand>
        <name>ATP</name>
        <dbReference type="ChEBI" id="CHEBI:30616"/>
    </ligand>
</feature>
<feature type="binding site" evidence="1">
    <location>
        <begin position="24"/>
        <end position="25"/>
    </location>
    <ligand>
        <name>ATP</name>
        <dbReference type="ChEBI" id="CHEBI:30616"/>
    </ligand>
</feature>
<feature type="binding site" evidence="1">
    <location>
        <position position="141"/>
    </location>
    <ligand>
        <name>L-tryptophan</name>
        <dbReference type="ChEBI" id="CHEBI:57912"/>
    </ligand>
</feature>
<feature type="binding site" evidence="1">
    <location>
        <begin position="153"/>
        <end position="155"/>
    </location>
    <ligand>
        <name>ATP</name>
        <dbReference type="ChEBI" id="CHEBI:30616"/>
    </ligand>
</feature>
<feature type="binding site" evidence="1">
    <location>
        <position position="192"/>
    </location>
    <ligand>
        <name>ATP</name>
        <dbReference type="ChEBI" id="CHEBI:30616"/>
    </ligand>
</feature>
<feature type="binding site" evidence="1">
    <location>
        <begin position="201"/>
        <end position="205"/>
    </location>
    <ligand>
        <name>ATP</name>
        <dbReference type="ChEBI" id="CHEBI:30616"/>
    </ligand>
</feature>
<accession>P9WFT2</accession>
<accession>L0TDU8</accession>
<accession>O53386</accession>
<accession>P67590</accession>
<organism>
    <name type="scientific">Mycobacterium tuberculosis (strain CDC 1551 / Oshkosh)</name>
    <dbReference type="NCBI Taxonomy" id="83331"/>
    <lineage>
        <taxon>Bacteria</taxon>
        <taxon>Bacillati</taxon>
        <taxon>Actinomycetota</taxon>
        <taxon>Actinomycetes</taxon>
        <taxon>Mycobacteriales</taxon>
        <taxon>Mycobacteriaceae</taxon>
        <taxon>Mycobacterium</taxon>
        <taxon>Mycobacterium tuberculosis complex</taxon>
    </lineage>
</organism>
<gene>
    <name evidence="1" type="primary">trpS</name>
    <name type="ordered locus">MT3440</name>
</gene>
<evidence type="ECO:0000255" key="1">
    <source>
        <dbReference type="HAMAP-Rule" id="MF_00140"/>
    </source>
</evidence>
<reference key="1">
    <citation type="journal article" date="2002" name="J. Bacteriol.">
        <title>Whole-genome comparison of Mycobacterium tuberculosis clinical and laboratory strains.</title>
        <authorList>
            <person name="Fleischmann R.D."/>
            <person name="Alland D."/>
            <person name="Eisen J.A."/>
            <person name="Carpenter L."/>
            <person name="White O."/>
            <person name="Peterson J.D."/>
            <person name="DeBoy R.T."/>
            <person name="Dodson R.J."/>
            <person name="Gwinn M.L."/>
            <person name="Haft D.H."/>
            <person name="Hickey E.K."/>
            <person name="Kolonay J.F."/>
            <person name="Nelson W.C."/>
            <person name="Umayam L.A."/>
            <person name="Ermolaeva M.D."/>
            <person name="Salzberg S.L."/>
            <person name="Delcher A."/>
            <person name="Utterback T.R."/>
            <person name="Weidman J.F."/>
            <person name="Khouri H.M."/>
            <person name="Gill J."/>
            <person name="Mikula A."/>
            <person name="Bishai W."/>
            <person name="Jacobs W.R. Jr."/>
            <person name="Venter J.C."/>
            <person name="Fraser C.M."/>
        </authorList>
    </citation>
    <scope>NUCLEOTIDE SEQUENCE [LARGE SCALE GENOMIC DNA]</scope>
    <source>
        <strain>CDC 1551 / Oshkosh</strain>
    </source>
</reference>